<gene>
    <name type="primary">Tle4</name>
    <name type="synonym">Esp2</name>
    <name type="synonym">Grg4</name>
</gene>
<protein>
    <recommendedName>
        <fullName>Transducin-like enhancer protein 4</fullName>
    </recommendedName>
    <alternativeName>
        <fullName>Grg-4</fullName>
    </alternativeName>
    <alternativeName>
        <fullName>Groucho-related protein 4</fullName>
    </alternativeName>
    <alternativeName>
        <fullName>Protein ESP2</fullName>
    </alternativeName>
</protein>
<accession>Q07141</accession>
<comment type="function">
    <text evidence="1 5">Transcriptional corepressor that binds to a number of transcription factors. Inhibits the transcriptional activation mediated by PAX5, and by CTNNB1 and TCF family members in Wnt signaling. The effects of full-length TLE family members may be modulated by association with dominant-negative AES. Essential for the transcriptional repressor activity of SIX3 during retina and lens development and for SIX3 transcriptional auto-repression (By similarity). Involved in transcriptional repression of GNRHR and enhances MSX1-mediated transcriptional repression of CGA/alpha-GSU (By similarity).</text>
</comment>
<comment type="subunit">
    <text evidence="4">Homooligomer and heterooligomer with other family members. Binds PAX5, LEF1, TCF7, TCF7L1 and TCF7L2. Interacts with ZNF703; TLE4 may mediate ZNF703 transcriptional repression. Interacts with SIX3 and SIX6. Interacts with PAX2 (By similarity).</text>
</comment>
<comment type="subcellular location">
    <subcellularLocation>
        <location>Nucleus</location>
    </subcellularLocation>
</comment>
<comment type="domain">
    <text evidence="9">WD repeat Groucho/TLE family members are characterized by 5 regions, a glutamine-rich Q domain, a glycine/proline-rich GP domain, a central CcN domain, containing a nuclear localization signal, and a serine/proline-rich SP domain. The most highly conserved are the N-terminal Q domain and the C-terminal WD-repeat domain.</text>
</comment>
<comment type="PTM">
    <text evidence="5">Phosphorylated. PAX5 binding increases phosphorylation.</text>
</comment>
<comment type="PTM">
    <text evidence="1">Ubiquitinated by XIAP/BIRC4.</text>
</comment>
<comment type="similarity">
    <text evidence="8">Belongs to the WD repeat Groucho/TLE family.</text>
</comment>
<comment type="caution">
    <text evidence="8">It is uncertain whether Met-1 or Met-8 is the initiator.</text>
</comment>
<comment type="sequence caution" evidence="8">
    <conflict type="erroneous initiation">
        <sequence resource="EMBL-CDS" id="AAC37640"/>
    </conflict>
    <text>Truncated N-terminus.</text>
</comment>
<keyword id="KW-0007">Acetylation</keyword>
<keyword id="KW-0539">Nucleus</keyword>
<keyword id="KW-0597">Phosphoprotein</keyword>
<keyword id="KW-1185">Reference proteome</keyword>
<keyword id="KW-0677">Repeat</keyword>
<keyword id="KW-0678">Repressor</keyword>
<keyword id="KW-0804">Transcription</keyword>
<keyword id="KW-0805">Transcription regulation</keyword>
<keyword id="KW-0832">Ubl conjugation</keyword>
<keyword id="KW-0853">WD repeat</keyword>
<keyword id="KW-0879">Wnt signaling pathway</keyword>
<dbReference type="EMBL" id="L14463">
    <property type="protein sequence ID" value="AAC37640.1"/>
    <property type="status" value="ALT_INIT"/>
    <property type="molecule type" value="mRNA"/>
</dbReference>
<dbReference type="PIR" id="B49555">
    <property type="entry name" value="B49555"/>
</dbReference>
<dbReference type="RefSeq" id="NP_062014.2">
    <property type="nucleotide sequence ID" value="NM_019141.2"/>
</dbReference>
<dbReference type="SMR" id="Q07141"/>
<dbReference type="FunCoup" id="Q07141">
    <property type="interactions" value="3109"/>
</dbReference>
<dbReference type="STRING" id="10116.ENSRNOP00000074268"/>
<dbReference type="GlyGen" id="Q07141">
    <property type="glycosylation" value="5 sites, 1 O-linked glycan (1 site)"/>
</dbReference>
<dbReference type="iPTMnet" id="Q07141"/>
<dbReference type="PhosphoSitePlus" id="Q07141"/>
<dbReference type="PaxDb" id="10116-ENSRNOP00000018272"/>
<dbReference type="GeneID" id="25565"/>
<dbReference type="KEGG" id="rno:25565"/>
<dbReference type="AGR" id="RGD:3868"/>
<dbReference type="CTD" id="7091"/>
<dbReference type="RGD" id="3868">
    <property type="gene designation" value="Tle4"/>
</dbReference>
<dbReference type="eggNOG" id="KOG0639">
    <property type="taxonomic scope" value="Eukaryota"/>
</dbReference>
<dbReference type="InParanoid" id="Q07141"/>
<dbReference type="OrthoDB" id="2624652at2759"/>
<dbReference type="PhylomeDB" id="Q07141"/>
<dbReference type="Reactome" id="R-RNO-201722">
    <property type="pathway name" value="Formation of the beta-catenin:TCF transactivating complex"/>
</dbReference>
<dbReference type="Reactome" id="R-RNO-3769402">
    <property type="pathway name" value="Deactivation of the beta-catenin transactivating complex"/>
</dbReference>
<dbReference type="Reactome" id="R-RNO-4641265">
    <property type="pathway name" value="Repression of WNT target genes"/>
</dbReference>
<dbReference type="PRO" id="PR:Q07141"/>
<dbReference type="Proteomes" id="UP000002494">
    <property type="component" value="Unplaced"/>
</dbReference>
<dbReference type="GO" id="GO:1990907">
    <property type="term" value="C:beta-catenin-TCF complex"/>
    <property type="evidence" value="ECO:0000266"/>
    <property type="project" value="RGD"/>
</dbReference>
<dbReference type="GO" id="GO:0005634">
    <property type="term" value="C:nucleus"/>
    <property type="evidence" value="ECO:0000266"/>
    <property type="project" value="RGD"/>
</dbReference>
<dbReference type="GO" id="GO:0005667">
    <property type="term" value="C:transcription regulator complex"/>
    <property type="evidence" value="ECO:0000318"/>
    <property type="project" value="GO_Central"/>
</dbReference>
<dbReference type="GO" id="GO:0003682">
    <property type="term" value="F:chromatin binding"/>
    <property type="evidence" value="ECO:0000266"/>
    <property type="project" value="RGD"/>
</dbReference>
<dbReference type="GO" id="GO:0140297">
    <property type="term" value="F:DNA-binding transcription factor binding"/>
    <property type="evidence" value="ECO:0000266"/>
    <property type="project" value="RGD"/>
</dbReference>
<dbReference type="GO" id="GO:0003714">
    <property type="term" value="F:transcription corepressor activity"/>
    <property type="evidence" value="ECO:0000266"/>
    <property type="project" value="RGD"/>
</dbReference>
<dbReference type="GO" id="GO:1990830">
    <property type="term" value="P:cellular response to leukemia inhibitory factor"/>
    <property type="evidence" value="ECO:0000266"/>
    <property type="project" value="RGD"/>
</dbReference>
<dbReference type="GO" id="GO:0090090">
    <property type="term" value="P:negative regulation of canonical Wnt signaling pathway"/>
    <property type="evidence" value="ECO:0000318"/>
    <property type="project" value="GO_Central"/>
</dbReference>
<dbReference type="GO" id="GO:0045892">
    <property type="term" value="P:negative regulation of DNA-templated transcription"/>
    <property type="evidence" value="ECO:0000266"/>
    <property type="project" value="RGD"/>
</dbReference>
<dbReference type="GO" id="GO:0000122">
    <property type="term" value="P:negative regulation of transcription by RNA polymerase II"/>
    <property type="evidence" value="ECO:0000250"/>
    <property type="project" value="UniProtKB"/>
</dbReference>
<dbReference type="GO" id="GO:0016055">
    <property type="term" value="P:Wnt signaling pathway"/>
    <property type="evidence" value="ECO:0000266"/>
    <property type="project" value="RGD"/>
</dbReference>
<dbReference type="CDD" id="cd00200">
    <property type="entry name" value="WD40"/>
    <property type="match status" value="1"/>
</dbReference>
<dbReference type="FunFam" id="2.130.10.10:FF:000001">
    <property type="entry name" value="transducin-like enhancer protein 3 isoform X1"/>
    <property type="match status" value="1"/>
</dbReference>
<dbReference type="Gene3D" id="2.130.10.10">
    <property type="entry name" value="YVTN repeat-like/Quinoprotein amine dehydrogenase"/>
    <property type="match status" value="1"/>
</dbReference>
<dbReference type="InterPro" id="IPR005617">
    <property type="entry name" value="Groucho/TLE_N"/>
</dbReference>
<dbReference type="InterPro" id="IPR009146">
    <property type="entry name" value="Groucho_enhance"/>
</dbReference>
<dbReference type="InterPro" id="IPR015943">
    <property type="entry name" value="WD40/YVTN_repeat-like_dom_sf"/>
</dbReference>
<dbReference type="InterPro" id="IPR019775">
    <property type="entry name" value="WD40_repeat_CS"/>
</dbReference>
<dbReference type="InterPro" id="IPR036322">
    <property type="entry name" value="WD40_repeat_dom_sf"/>
</dbReference>
<dbReference type="InterPro" id="IPR001680">
    <property type="entry name" value="WD40_rpt"/>
</dbReference>
<dbReference type="PANTHER" id="PTHR10814">
    <property type="entry name" value="TRANSDUCIN-LIKE ENHANCER PROTEIN"/>
    <property type="match status" value="1"/>
</dbReference>
<dbReference type="PANTHER" id="PTHR10814:SF31">
    <property type="entry name" value="TRANSDUCIN-LIKE ENHANCER PROTEIN 4"/>
    <property type="match status" value="1"/>
</dbReference>
<dbReference type="Pfam" id="PF03920">
    <property type="entry name" value="TLE_N"/>
    <property type="match status" value="1"/>
</dbReference>
<dbReference type="Pfam" id="PF00400">
    <property type="entry name" value="WD40"/>
    <property type="match status" value="5"/>
</dbReference>
<dbReference type="PRINTS" id="PR01850">
    <property type="entry name" value="GROUCHOFAMLY"/>
</dbReference>
<dbReference type="SMART" id="SM00320">
    <property type="entry name" value="WD40"/>
    <property type="match status" value="7"/>
</dbReference>
<dbReference type="SUPFAM" id="SSF50978">
    <property type="entry name" value="WD40 repeat-like"/>
    <property type="match status" value="1"/>
</dbReference>
<dbReference type="PROSITE" id="PS00678">
    <property type="entry name" value="WD_REPEATS_1"/>
    <property type="match status" value="2"/>
</dbReference>
<dbReference type="PROSITE" id="PS50082">
    <property type="entry name" value="WD_REPEATS_2"/>
    <property type="match status" value="2"/>
</dbReference>
<dbReference type="PROSITE" id="PS50294">
    <property type="entry name" value="WD_REPEATS_REGION"/>
    <property type="match status" value="1"/>
</dbReference>
<proteinExistence type="evidence at protein level"/>
<feature type="chain" id="PRO_0000051285" description="Transducin-like enhancer protein 4">
    <location>
        <begin position="1"/>
        <end position="748"/>
    </location>
</feature>
<feature type="repeat" description="WD 1">
    <location>
        <begin position="460"/>
        <end position="498"/>
    </location>
</feature>
<feature type="repeat" description="WD 2">
    <location>
        <begin position="506"/>
        <end position="545"/>
    </location>
</feature>
<feature type="repeat" description="WD 3">
    <location>
        <begin position="550"/>
        <end position="589"/>
    </location>
</feature>
<feature type="repeat" description="WD 4">
    <location>
        <begin position="592"/>
        <end position="631"/>
    </location>
</feature>
<feature type="repeat" description="WD 5">
    <location>
        <begin position="633"/>
        <end position="672"/>
    </location>
</feature>
<feature type="repeat" description="WD 6">
    <location>
        <begin position="674"/>
        <end position="713"/>
    </location>
</feature>
<feature type="repeat" description="WD 7">
    <location>
        <begin position="715"/>
        <end position="748"/>
    </location>
</feature>
<feature type="region of interest" description="Q domain" evidence="4">
    <location>
        <begin position="1"/>
        <end position="112"/>
    </location>
</feature>
<feature type="region of interest" description="Disordered" evidence="7">
    <location>
        <begin position="1"/>
        <end position="20"/>
    </location>
</feature>
<feature type="region of interest" description="GP domain" evidence="4">
    <location>
        <begin position="113"/>
        <end position="179"/>
    </location>
</feature>
<feature type="region of interest" description="Disordered" evidence="7">
    <location>
        <begin position="157"/>
        <end position="332"/>
    </location>
</feature>
<feature type="region of interest" description="CcN domain" evidence="4">
    <location>
        <begin position="180"/>
        <end position="249"/>
    </location>
</feature>
<feature type="region of interest" description="SP domain" evidence="4">
    <location>
        <begin position="250"/>
        <end position="427"/>
    </location>
</feature>
<feature type="compositionally biased region" description="Basic and acidic residues" evidence="7">
    <location>
        <begin position="158"/>
        <end position="177"/>
    </location>
</feature>
<feature type="compositionally biased region" description="Low complexity" evidence="7">
    <location>
        <begin position="178"/>
        <end position="189"/>
    </location>
</feature>
<feature type="compositionally biased region" description="Basic and acidic residues" evidence="7">
    <location>
        <begin position="190"/>
        <end position="227"/>
    </location>
</feature>
<feature type="compositionally biased region" description="Basic and acidic residues" evidence="7">
    <location>
        <begin position="248"/>
        <end position="264"/>
    </location>
</feature>
<feature type="compositionally biased region" description="Low complexity" evidence="7">
    <location>
        <begin position="265"/>
        <end position="280"/>
    </location>
</feature>
<feature type="compositionally biased region" description="Polar residues" evidence="7">
    <location>
        <begin position="292"/>
        <end position="303"/>
    </location>
</feature>
<feature type="modified residue" description="Phosphoserine" evidence="10">
    <location>
        <position position="183"/>
    </location>
</feature>
<feature type="modified residue" description="Phosphoserine" evidence="3">
    <location>
        <position position="187"/>
    </location>
</feature>
<feature type="modified residue" description="Phosphoserine" evidence="3">
    <location>
        <position position="191"/>
    </location>
</feature>
<feature type="modified residue" description="Phosphoserine" evidence="3">
    <location>
        <position position="197"/>
    </location>
</feature>
<feature type="modified residue" description="N6-acetyllysine" evidence="4">
    <location>
        <position position="212"/>
    </location>
</feature>
<feature type="modified residue" description="Phosphoserine" evidence="2">
    <location>
        <position position="220"/>
    </location>
</feature>
<feature type="modified residue" description="Phosphoserine; by CK2" evidence="4 6">
    <location>
        <position position="225"/>
    </location>
</feature>
<feature type="modified residue" description="Phosphoserine; by CDK1" evidence="6">
    <location>
        <position position="240"/>
    </location>
</feature>
<feature type="modified residue" description="Phosphoserine" evidence="4">
    <location>
        <position position="244"/>
    </location>
</feature>
<feature type="modified residue" description="Phosphoserine" evidence="3">
    <location>
        <position position="248"/>
    </location>
</feature>
<feature type="modified residue" description="N6-acetyllysine" evidence="4">
    <location>
        <position position="256"/>
    </location>
</feature>
<feature type="modified residue" description="Phosphoserine" evidence="10">
    <location>
        <position position="267"/>
    </location>
</feature>
<feature type="modified residue" description="Phosphothreonine" evidence="5">
    <location>
        <position position="293"/>
    </location>
</feature>
<feature type="modified residue" description="Phosphoserine" evidence="5">
    <location>
        <position position="296"/>
    </location>
</feature>
<feature type="modified residue" description="Phosphoserine" evidence="3">
    <location>
        <position position="298"/>
    </location>
</feature>
<feature type="modified residue" description="Phosphothreonine" evidence="5">
    <location>
        <position position="300"/>
    </location>
</feature>
<feature type="modified residue" description="Phosphothreonine" evidence="3">
    <location>
        <position position="302"/>
    </location>
</feature>
<feature type="modified residue" description="Phosphothreonine" evidence="3">
    <location>
        <position position="309"/>
    </location>
</feature>
<feature type="modified residue" description="Phosphothreonine" evidence="3">
    <location>
        <position position="315"/>
    </location>
</feature>
<feature type="modified residue" description="Phosphoserine" evidence="3">
    <location>
        <position position="394"/>
    </location>
</feature>
<reference key="1">
    <citation type="journal article" date="1993" name="J. Biol. Chem.">
        <title>A rat homolog of the Drosophila enhancer of split (groucho) locus lacking WD-40 repeats.</title>
        <authorList>
            <person name="Schmidt C.J."/>
            <person name="Sladek T.E."/>
        </authorList>
    </citation>
    <scope>NUCLEOTIDE SEQUENCE [MRNA]</scope>
    <source>
        <tissue>Hippocampus</tissue>
    </source>
</reference>
<reference key="2">
    <citation type="journal article" date="2008" name="Genome Biol.">
        <title>The Groucho/TLE/Grg family of transcriptional co-repressors.</title>
        <authorList>
            <person name="Jennings B.H."/>
            <person name="Ish-Horowicz D."/>
        </authorList>
    </citation>
    <scope>REVIEW</scope>
</reference>
<reference key="3">
    <citation type="journal article" date="2012" name="Nat. Commun.">
        <title>Quantitative maps of protein phosphorylation sites across 14 different rat organs and tissues.</title>
        <authorList>
            <person name="Lundby A."/>
            <person name="Secher A."/>
            <person name="Lage K."/>
            <person name="Nordsborg N.B."/>
            <person name="Dmytriyev A."/>
            <person name="Lundby C."/>
            <person name="Olsen J.V."/>
        </authorList>
    </citation>
    <scope>PHOSPHORYLATION [LARGE SCALE ANALYSIS] AT SER-183 AND SER-267</scope>
    <scope>IDENTIFICATION BY MASS SPECTROMETRY [LARGE SCALE ANALYSIS]</scope>
</reference>
<organism>
    <name type="scientific">Rattus norvegicus</name>
    <name type="common">Rat</name>
    <dbReference type="NCBI Taxonomy" id="10116"/>
    <lineage>
        <taxon>Eukaryota</taxon>
        <taxon>Metazoa</taxon>
        <taxon>Chordata</taxon>
        <taxon>Craniata</taxon>
        <taxon>Vertebrata</taxon>
        <taxon>Euteleostomi</taxon>
        <taxon>Mammalia</taxon>
        <taxon>Eutheria</taxon>
        <taxon>Euarchontoglires</taxon>
        <taxon>Glires</taxon>
        <taxon>Rodentia</taxon>
        <taxon>Myomorpha</taxon>
        <taxon>Muroidea</taxon>
        <taxon>Muridae</taxon>
        <taxon>Murinae</taxon>
        <taxon>Rattus</taxon>
    </lineage>
</organism>
<sequence>MIRDLSKMYRRRAHPAPHQPAQPFKFTISESCDRIKEEFQFLQAQYHSLKLECEKLASEKTEMQRHYVMYYEMSYGLNIEMHKQAEIVKRLNAICAQVIPCLSQEQQQLQAQHLLTWTWSACASDTTPLGFSQPFHPSGSSAGLLALSSALGGQSHLPIKDEKKHHDNDHQRDRDSIKSSSVSPSASFRGSEKHRNSTDYSSESKKQKTEEKEIAARYDSDGEKSDDNLVVDVSNEDPSSPRGSPAHSPRENGLDKTRLLKKDAPISPASVASSSSTPSSKSKELSLNEKSTTPVSKSNTPTPRTDAPTPGSNSTPGLRPVPGKPPGVDPLASSLRTPMAVPCPYPTPFGIVPHAGMNGELTSPGAAYAGLHNISPQMSAAAAAAAAAAAYGRSPVVGFDPHHHMRVPAIPPNLTGIPGGKPAYSFHVSADGQMQPVPFPPDALIGPGIPRHARQINTLNHGEVVCAVTISNPTRHVYTGGKGCVKVWDITDPGNKSPVSQLDCLNRDNYIRSCRLLPDGRTLIVGGEASTLSIWDLAAPTPRIKAELTSSAPACYALAISPDSKVCFSCCSDGNIAVWDLHNQTLVRQFQGHTDGASCIDISNDGTKLWTGGLDNTVRSWDLREGRQLQQHDFTSQIFSLGYCPTGEWLAVGMENSNVEVLHVTKPDKYQLHLHESCVLSLKFAHCGKWFVRPGKDNLLNAWRTPYGASIFQSKESSSVLSCDISADDKYIVTGSGDKKATVYEVIY</sequence>
<name>TLE4_RAT</name>
<evidence type="ECO:0000250" key="1"/>
<evidence type="ECO:0000250" key="2">
    <source>
        <dbReference type="UniProtKB" id="Q04724"/>
    </source>
</evidence>
<evidence type="ECO:0000250" key="3">
    <source>
        <dbReference type="UniProtKB" id="Q04726"/>
    </source>
</evidence>
<evidence type="ECO:0000250" key="4">
    <source>
        <dbReference type="UniProtKB" id="Q04727"/>
    </source>
</evidence>
<evidence type="ECO:0000250" key="5">
    <source>
        <dbReference type="UniProtKB" id="Q62441"/>
    </source>
</evidence>
<evidence type="ECO:0000255" key="6"/>
<evidence type="ECO:0000256" key="7">
    <source>
        <dbReference type="SAM" id="MobiDB-lite"/>
    </source>
</evidence>
<evidence type="ECO:0000305" key="8"/>
<evidence type="ECO:0000305" key="9">
    <source>
    </source>
</evidence>
<evidence type="ECO:0007744" key="10">
    <source>
    </source>
</evidence>